<keyword id="KW-0997">Cell inner membrane</keyword>
<keyword id="KW-1003">Cell membrane</keyword>
<keyword id="KW-0472">Membrane</keyword>
<keyword id="KW-0520">NAD</keyword>
<keyword id="KW-0874">Quinone</keyword>
<keyword id="KW-1185">Reference proteome</keyword>
<keyword id="KW-1278">Translocase</keyword>
<keyword id="KW-0812">Transmembrane</keyword>
<keyword id="KW-1133">Transmembrane helix</keyword>
<keyword id="KW-0813">Transport</keyword>
<keyword id="KW-0830">Ubiquinone</keyword>
<dbReference type="EC" id="7.1.1.-" evidence="1"/>
<dbReference type="EMBL" id="CP000133">
    <property type="protein sequence ID" value="ABC90414.1"/>
    <property type="molecule type" value="Genomic_DNA"/>
</dbReference>
<dbReference type="SMR" id="Q2K9S2"/>
<dbReference type="KEGG" id="ret:RHE_CH01615"/>
<dbReference type="eggNOG" id="COG0713">
    <property type="taxonomic scope" value="Bacteria"/>
</dbReference>
<dbReference type="HOGENOM" id="CLU_144724_2_0_5"/>
<dbReference type="OrthoDB" id="9811124at2"/>
<dbReference type="Proteomes" id="UP000001936">
    <property type="component" value="Chromosome"/>
</dbReference>
<dbReference type="GO" id="GO:0030964">
    <property type="term" value="C:NADH dehydrogenase complex"/>
    <property type="evidence" value="ECO:0007669"/>
    <property type="project" value="TreeGrafter"/>
</dbReference>
<dbReference type="GO" id="GO:0005886">
    <property type="term" value="C:plasma membrane"/>
    <property type="evidence" value="ECO:0007669"/>
    <property type="project" value="UniProtKB-SubCell"/>
</dbReference>
<dbReference type="GO" id="GO:0050136">
    <property type="term" value="F:NADH:ubiquinone reductase (non-electrogenic) activity"/>
    <property type="evidence" value="ECO:0007669"/>
    <property type="project" value="UniProtKB-UniRule"/>
</dbReference>
<dbReference type="GO" id="GO:0048038">
    <property type="term" value="F:quinone binding"/>
    <property type="evidence" value="ECO:0007669"/>
    <property type="project" value="UniProtKB-KW"/>
</dbReference>
<dbReference type="GO" id="GO:0042773">
    <property type="term" value="P:ATP synthesis coupled electron transport"/>
    <property type="evidence" value="ECO:0007669"/>
    <property type="project" value="InterPro"/>
</dbReference>
<dbReference type="FunFam" id="1.10.287.3510:FF:000001">
    <property type="entry name" value="NADH-quinone oxidoreductase subunit K"/>
    <property type="match status" value="1"/>
</dbReference>
<dbReference type="Gene3D" id="1.10.287.3510">
    <property type="match status" value="1"/>
</dbReference>
<dbReference type="HAMAP" id="MF_01456">
    <property type="entry name" value="NDH1_NuoK"/>
    <property type="match status" value="1"/>
</dbReference>
<dbReference type="InterPro" id="IPR001133">
    <property type="entry name" value="NADH_UbQ_OxRdtase_chain4L/K"/>
</dbReference>
<dbReference type="InterPro" id="IPR039428">
    <property type="entry name" value="NUOK/Mnh_C1-like"/>
</dbReference>
<dbReference type="NCBIfam" id="NF004320">
    <property type="entry name" value="PRK05715.1-2"/>
    <property type="match status" value="1"/>
</dbReference>
<dbReference type="NCBIfam" id="NF004321">
    <property type="entry name" value="PRK05715.1-3"/>
    <property type="match status" value="1"/>
</dbReference>
<dbReference type="NCBIfam" id="NF004323">
    <property type="entry name" value="PRK05715.1-5"/>
    <property type="match status" value="1"/>
</dbReference>
<dbReference type="PANTHER" id="PTHR11434:SF21">
    <property type="entry name" value="NADH DEHYDROGENASE SUBUNIT 4L-RELATED"/>
    <property type="match status" value="1"/>
</dbReference>
<dbReference type="PANTHER" id="PTHR11434">
    <property type="entry name" value="NADH-UBIQUINONE OXIDOREDUCTASE SUBUNIT ND4L"/>
    <property type="match status" value="1"/>
</dbReference>
<dbReference type="Pfam" id="PF00420">
    <property type="entry name" value="Oxidored_q2"/>
    <property type="match status" value="1"/>
</dbReference>
<accession>Q2K9S2</accession>
<name>NUOK1_RHIEC</name>
<organism>
    <name type="scientific">Rhizobium etli (strain ATCC 51251 / DSM 11541 / JCM 21823 / NBRC 15573 / CFN 42)</name>
    <dbReference type="NCBI Taxonomy" id="347834"/>
    <lineage>
        <taxon>Bacteria</taxon>
        <taxon>Pseudomonadati</taxon>
        <taxon>Pseudomonadota</taxon>
        <taxon>Alphaproteobacteria</taxon>
        <taxon>Hyphomicrobiales</taxon>
        <taxon>Rhizobiaceae</taxon>
        <taxon>Rhizobium/Agrobacterium group</taxon>
        <taxon>Rhizobium</taxon>
    </lineage>
</organism>
<proteinExistence type="inferred from homology"/>
<sequence>MVIGLSHYLTVSAILFTLGVFGIFLNRKNVIVILMSVELILLAVNINMVAFSHFLNDIVGQVFALFILTVAAAEAAIGLAILVVFYRNRGSIAVEDVNMMKG</sequence>
<gene>
    <name evidence="1" type="primary">nuoK1</name>
    <name type="ordered locus">RHE_CH01615</name>
</gene>
<comment type="function">
    <text evidence="1">NDH-1 shuttles electrons from NADH, via FMN and iron-sulfur (Fe-S) centers, to quinones in the respiratory chain. The immediate electron acceptor for the enzyme in this species is believed to be ubiquinone. Couples the redox reaction to proton translocation (for every two electrons transferred, four hydrogen ions are translocated across the cytoplasmic membrane), and thus conserves the redox energy in a proton gradient.</text>
</comment>
<comment type="catalytic activity">
    <reaction evidence="1">
        <text>a quinone + NADH + 5 H(+)(in) = a quinol + NAD(+) + 4 H(+)(out)</text>
        <dbReference type="Rhea" id="RHEA:57888"/>
        <dbReference type="ChEBI" id="CHEBI:15378"/>
        <dbReference type="ChEBI" id="CHEBI:24646"/>
        <dbReference type="ChEBI" id="CHEBI:57540"/>
        <dbReference type="ChEBI" id="CHEBI:57945"/>
        <dbReference type="ChEBI" id="CHEBI:132124"/>
    </reaction>
</comment>
<comment type="subunit">
    <text evidence="1">NDH-1 is composed of 14 different subunits. Subunits NuoA, H, J, K, L, M, N constitute the membrane sector of the complex.</text>
</comment>
<comment type="subcellular location">
    <subcellularLocation>
        <location evidence="1">Cell inner membrane</location>
        <topology evidence="1">Multi-pass membrane protein</topology>
    </subcellularLocation>
</comment>
<comment type="similarity">
    <text evidence="1">Belongs to the complex I subunit 4L family.</text>
</comment>
<feature type="chain" id="PRO_0000390188" description="NADH-quinone oxidoreductase subunit K 1">
    <location>
        <begin position="1"/>
        <end position="102"/>
    </location>
</feature>
<feature type="transmembrane region" description="Helical" evidence="1">
    <location>
        <begin position="5"/>
        <end position="25"/>
    </location>
</feature>
<feature type="transmembrane region" description="Helical" evidence="1">
    <location>
        <begin position="31"/>
        <end position="51"/>
    </location>
</feature>
<feature type="transmembrane region" description="Helical" evidence="1">
    <location>
        <begin position="65"/>
        <end position="85"/>
    </location>
</feature>
<reference key="1">
    <citation type="journal article" date="2006" name="Proc. Natl. Acad. Sci. U.S.A.">
        <title>The partitioned Rhizobium etli genome: genetic and metabolic redundancy in seven interacting replicons.</title>
        <authorList>
            <person name="Gonzalez V."/>
            <person name="Santamaria R.I."/>
            <person name="Bustos P."/>
            <person name="Hernandez-Gonzalez I."/>
            <person name="Medrano-Soto A."/>
            <person name="Moreno-Hagelsieb G."/>
            <person name="Janga S.C."/>
            <person name="Ramirez M.A."/>
            <person name="Jimenez-Jacinto V."/>
            <person name="Collado-Vides J."/>
            <person name="Davila G."/>
        </authorList>
    </citation>
    <scope>NUCLEOTIDE SEQUENCE [LARGE SCALE GENOMIC DNA]</scope>
    <source>
        <strain>ATCC 51251 / DSM 11541 / JCM 21823 / NBRC 15573 / CFN 42</strain>
    </source>
</reference>
<protein>
    <recommendedName>
        <fullName evidence="1">NADH-quinone oxidoreductase subunit K 1</fullName>
        <ecNumber evidence="1">7.1.1.-</ecNumber>
    </recommendedName>
    <alternativeName>
        <fullName evidence="1">NADH dehydrogenase I subunit K 1</fullName>
    </alternativeName>
    <alternativeName>
        <fullName evidence="1">NDH-1 subunit K 1</fullName>
    </alternativeName>
</protein>
<evidence type="ECO:0000255" key="1">
    <source>
        <dbReference type="HAMAP-Rule" id="MF_01456"/>
    </source>
</evidence>